<sequence length="256" mass="29027">MAVGKNKRLSKGKKGLKKRVVDPFTRKEWFDIKAPTTFENRAVGKTLINKSTGLKNAADGLKGRVIEVNLADLQGSEDHAYRKVKLRVDEVQGKNLLTNFHGIDFTSDKLRSLVRKWQSLVEANVTVKTADDYYLRVFAIAFTKRQPNQVKKTTYAQSSKLREIRKKMMEIMQREVSNSTLAQLTQKLIPEVIGREIEKSTQTIFPLQNVHIRKVKLLKQPKFDLGNLMSLHGEGASEEKGKKVSSGFKDVVLESV</sequence>
<accession>A5DN58</accession>
<comment type="subunit">
    <text evidence="1">Component of the small ribosomal subunit. Mature ribosomes consist of a small (40S) and a large (60S) subunit. The 40S subunit contains about 33 different proteins and 1 molecule of RNA (18S). The 60S subunit contains about 49 different proteins and 3 molecules of RNA (25S, 5.8S and 5S).</text>
</comment>
<comment type="subcellular location">
    <subcellularLocation>
        <location evidence="1">Cytoplasm</location>
    </subcellularLocation>
</comment>
<comment type="similarity">
    <text evidence="1">Belongs to the eukaryotic ribosomal protein eS1 family.</text>
</comment>
<gene>
    <name evidence="1" type="primary">RPS1</name>
    <name type="ORF">PGUG_04709</name>
</gene>
<proteinExistence type="inferred from homology"/>
<name>RS3A_PICGU</name>
<reference key="1">
    <citation type="journal article" date="2009" name="Nature">
        <title>Evolution of pathogenicity and sexual reproduction in eight Candida genomes.</title>
        <authorList>
            <person name="Butler G."/>
            <person name="Rasmussen M.D."/>
            <person name="Lin M.F."/>
            <person name="Santos M.A.S."/>
            <person name="Sakthikumar S."/>
            <person name="Munro C.A."/>
            <person name="Rheinbay E."/>
            <person name="Grabherr M."/>
            <person name="Forche A."/>
            <person name="Reedy J.L."/>
            <person name="Agrafioti I."/>
            <person name="Arnaud M.B."/>
            <person name="Bates S."/>
            <person name="Brown A.J.P."/>
            <person name="Brunke S."/>
            <person name="Costanzo M.C."/>
            <person name="Fitzpatrick D.A."/>
            <person name="de Groot P.W.J."/>
            <person name="Harris D."/>
            <person name="Hoyer L.L."/>
            <person name="Hube B."/>
            <person name="Klis F.M."/>
            <person name="Kodira C."/>
            <person name="Lennard N."/>
            <person name="Logue M.E."/>
            <person name="Martin R."/>
            <person name="Neiman A.M."/>
            <person name="Nikolaou E."/>
            <person name="Quail M.A."/>
            <person name="Quinn J."/>
            <person name="Santos M.C."/>
            <person name="Schmitzberger F.F."/>
            <person name="Sherlock G."/>
            <person name="Shah P."/>
            <person name="Silverstein K.A.T."/>
            <person name="Skrzypek M.S."/>
            <person name="Soll D."/>
            <person name="Staggs R."/>
            <person name="Stansfield I."/>
            <person name="Stumpf M.P.H."/>
            <person name="Sudbery P.E."/>
            <person name="Srikantha T."/>
            <person name="Zeng Q."/>
            <person name="Berman J."/>
            <person name="Berriman M."/>
            <person name="Heitman J."/>
            <person name="Gow N.A.R."/>
            <person name="Lorenz M.C."/>
            <person name="Birren B.W."/>
            <person name="Kellis M."/>
            <person name="Cuomo C.A."/>
        </authorList>
    </citation>
    <scope>NUCLEOTIDE SEQUENCE [LARGE SCALE GENOMIC DNA]</scope>
    <source>
        <strain>ATCC 6260 / CBS 566 / DSM 6381 / JCM 1539 / NBRC 10279 / NRRL Y-324</strain>
    </source>
</reference>
<dbReference type="EMBL" id="CH408160">
    <property type="protein sequence ID" value="EDK40611.1"/>
    <property type="molecule type" value="Genomic_DNA"/>
</dbReference>
<dbReference type="RefSeq" id="XP_001482754.1">
    <property type="nucleotide sequence ID" value="XM_001482704.1"/>
</dbReference>
<dbReference type="SMR" id="A5DN58"/>
<dbReference type="FunCoup" id="A5DN58">
    <property type="interactions" value="1340"/>
</dbReference>
<dbReference type="STRING" id="294746.A5DN58"/>
<dbReference type="GeneID" id="5124961"/>
<dbReference type="KEGG" id="pgu:PGUG_04709"/>
<dbReference type="VEuPathDB" id="FungiDB:PGUG_04709"/>
<dbReference type="eggNOG" id="KOG1628">
    <property type="taxonomic scope" value="Eukaryota"/>
</dbReference>
<dbReference type="HOGENOM" id="CLU_062507_0_0_1"/>
<dbReference type="InParanoid" id="A5DN58"/>
<dbReference type="OMA" id="TRFKGHE"/>
<dbReference type="OrthoDB" id="9834376at2759"/>
<dbReference type="Proteomes" id="UP000001997">
    <property type="component" value="Unassembled WGS sequence"/>
</dbReference>
<dbReference type="GO" id="GO:0022627">
    <property type="term" value="C:cytosolic small ribosomal subunit"/>
    <property type="evidence" value="ECO:0007669"/>
    <property type="project" value="UniProtKB-UniRule"/>
</dbReference>
<dbReference type="GO" id="GO:0003735">
    <property type="term" value="F:structural constituent of ribosome"/>
    <property type="evidence" value="ECO:0007669"/>
    <property type="project" value="UniProtKB-UniRule"/>
</dbReference>
<dbReference type="GO" id="GO:0006412">
    <property type="term" value="P:translation"/>
    <property type="evidence" value="ECO:0007669"/>
    <property type="project" value="UniProtKB-UniRule"/>
</dbReference>
<dbReference type="HAMAP" id="MF_03122">
    <property type="entry name" value="Ribosomal_eS1_euk"/>
    <property type="match status" value="1"/>
</dbReference>
<dbReference type="InterPro" id="IPR001593">
    <property type="entry name" value="Ribosomal_eS1"/>
</dbReference>
<dbReference type="InterPro" id="IPR027500">
    <property type="entry name" value="Ribosomal_eS1_euk"/>
</dbReference>
<dbReference type="PANTHER" id="PTHR11830">
    <property type="entry name" value="40S RIBOSOMAL PROTEIN S3A"/>
    <property type="match status" value="1"/>
</dbReference>
<dbReference type="Pfam" id="PF01015">
    <property type="entry name" value="Ribosomal_S3Ae"/>
    <property type="match status" value="1"/>
</dbReference>
<dbReference type="SMART" id="SM01397">
    <property type="entry name" value="Ribosomal_S3Ae"/>
    <property type="match status" value="1"/>
</dbReference>
<protein>
    <recommendedName>
        <fullName evidence="1">Small ribosomal subunit protein eS1</fullName>
    </recommendedName>
    <alternativeName>
        <fullName evidence="2">40S ribosomal protein S1</fullName>
    </alternativeName>
</protein>
<evidence type="ECO:0000255" key="1">
    <source>
        <dbReference type="HAMAP-Rule" id="MF_03122"/>
    </source>
</evidence>
<evidence type="ECO:0000305" key="2"/>
<organism>
    <name type="scientific">Meyerozyma guilliermondii (strain ATCC 6260 / CBS 566 / DSM 6381 / JCM 1539 / NBRC 10279 / NRRL Y-324)</name>
    <name type="common">Yeast</name>
    <name type="synonym">Candida guilliermondii</name>
    <dbReference type="NCBI Taxonomy" id="294746"/>
    <lineage>
        <taxon>Eukaryota</taxon>
        <taxon>Fungi</taxon>
        <taxon>Dikarya</taxon>
        <taxon>Ascomycota</taxon>
        <taxon>Saccharomycotina</taxon>
        <taxon>Pichiomycetes</taxon>
        <taxon>Debaryomycetaceae</taxon>
        <taxon>Meyerozyma</taxon>
    </lineage>
</organism>
<keyword id="KW-0007">Acetylation</keyword>
<keyword id="KW-0963">Cytoplasm</keyword>
<keyword id="KW-1185">Reference proteome</keyword>
<keyword id="KW-0687">Ribonucleoprotein</keyword>
<keyword id="KW-0689">Ribosomal protein</keyword>
<feature type="initiator methionine" description="Removed" evidence="1">
    <location>
        <position position="1"/>
    </location>
</feature>
<feature type="chain" id="PRO_0000389397" description="Small ribosomal subunit protein eS1">
    <location>
        <begin position="2"/>
        <end position="256"/>
    </location>
</feature>
<feature type="modified residue" description="N-acetylalanine; partial" evidence="1">
    <location>
        <position position="2"/>
    </location>
</feature>